<comment type="function">
    <text evidence="1">Essential cell division protein that stabilizes the FtsZ protofilaments by cross-linking them and that serves as a cytoplasmic membrane anchor for the Z ring. Also required for the recruitment to the septal ring of downstream cell division proteins.</text>
</comment>
<comment type="subunit">
    <text evidence="1">Interacts with FtsZ via their C-terminal domains.</text>
</comment>
<comment type="subcellular location">
    <subcellularLocation>
        <location evidence="1">Cell inner membrane</location>
        <topology evidence="1">Single-pass type I membrane protein</topology>
    </subcellularLocation>
    <text evidence="1">Localizes to the Z ring in an FtsZ-dependent manner.</text>
</comment>
<comment type="similarity">
    <text evidence="1">Belongs to the ZipA family.</text>
</comment>
<accession>A0KVI3</accession>
<name>ZIPA_SHESA</name>
<organism>
    <name type="scientific">Shewanella sp. (strain ANA-3)</name>
    <dbReference type="NCBI Taxonomy" id="94122"/>
    <lineage>
        <taxon>Bacteria</taxon>
        <taxon>Pseudomonadati</taxon>
        <taxon>Pseudomonadota</taxon>
        <taxon>Gammaproteobacteria</taxon>
        <taxon>Alteromonadales</taxon>
        <taxon>Shewanellaceae</taxon>
        <taxon>Shewanella</taxon>
    </lineage>
</organism>
<feature type="chain" id="PRO_1000015158" description="Cell division protein ZipA">
    <location>
        <begin position="1"/>
        <end position="346"/>
    </location>
</feature>
<feature type="topological domain" description="Periplasmic" evidence="1">
    <location>
        <begin position="1"/>
        <end position="6"/>
    </location>
</feature>
<feature type="transmembrane region" description="Helical" evidence="1">
    <location>
        <begin position="7"/>
        <end position="27"/>
    </location>
</feature>
<feature type="topological domain" description="Cytoplasmic" evidence="1">
    <location>
        <begin position="28"/>
        <end position="346"/>
    </location>
</feature>
<feature type="region of interest" description="Disordered" evidence="2">
    <location>
        <begin position="116"/>
        <end position="146"/>
    </location>
</feature>
<proteinExistence type="inferred from homology"/>
<keyword id="KW-0131">Cell cycle</keyword>
<keyword id="KW-0132">Cell division</keyword>
<keyword id="KW-0997">Cell inner membrane</keyword>
<keyword id="KW-1003">Cell membrane</keyword>
<keyword id="KW-0472">Membrane</keyword>
<keyword id="KW-0812">Transmembrane</keyword>
<keyword id="KW-1133">Transmembrane helix</keyword>
<protein>
    <recommendedName>
        <fullName evidence="1">Cell division protein ZipA</fullName>
    </recommendedName>
</protein>
<reference key="1">
    <citation type="submission" date="2006-09" db="EMBL/GenBank/DDBJ databases">
        <title>Complete sequence of chromosome 1 of Shewanella sp. ANA-3.</title>
        <authorList>
            <person name="Copeland A."/>
            <person name="Lucas S."/>
            <person name="Lapidus A."/>
            <person name="Barry K."/>
            <person name="Detter J.C."/>
            <person name="Glavina del Rio T."/>
            <person name="Hammon N."/>
            <person name="Israni S."/>
            <person name="Dalin E."/>
            <person name="Tice H."/>
            <person name="Pitluck S."/>
            <person name="Chertkov O."/>
            <person name="Brettin T."/>
            <person name="Bruce D."/>
            <person name="Han C."/>
            <person name="Tapia R."/>
            <person name="Gilna P."/>
            <person name="Schmutz J."/>
            <person name="Larimer F."/>
            <person name="Land M."/>
            <person name="Hauser L."/>
            <person name="Kyrpides N."/>
            <person name="Kim E."/>
            <person name="Newman D."/>
            <person name="Salticov C."/>
            <person name="Konstantinidis K."/>
            <person name="Klappenback J."/>
            <person name="Tiedje J."/>
            <person name="Richardson P."/>
        </authorList>
    </citation>
    <scope>NUCLEOTIDE SEQUENCE [LARGE SCALE GENOMIC DNA]</scope>
    <source>
        <strain>ANA-3</strain>
    </source>
</reference>
<dbReference type="EMBL" id="CP000469">
    <property type="protein sequence ID" value="ABK47802.1"/>
    <property type="molecule type" value="Genomic_DNA"/>
</dbReference>
<dbReference type="RefSeq" id="WP_011716613.1">
    <property type="nucleotide sequence ID" value="NC_008577.1"/>
</dbReference>
<dbReference type="SMR" id="A0KVI3"/>
<dbReference type="STRING" id="94122.Shewana3_1568"/>
<dbReference type="KEGG" id="shn:Shewana3_1568"/>
<dbReference type="eggNOG" id="COG3115">
    <property type="taxonomic scope" value="Bacteria"/>
</dbReference>
<dbReference type="HOGENOM" id="CLU_030174_1_0_6"/>
<dbReference type="OrthoDB" id="7054914at2"/>
<dbReference type="Proteomes" id="UP000002589">
    <property type="component" value="Chromosome"/>
</dbReference>
<dbReference type="GO" id="GO:0032153">
    <property type="term" value="C:cell division site"/>
    <property type="evidence" value="ECO:0007669"/>
    <property type="project" value="UniProtKB-UniRule"/>
</dbReference>
<dbReference type="GO" id="GO:0005886">
    <property type="term" value="C:plasma membrane"/>
    <property type="evidence" value="ECO:0007669"/>
    <property type="project" value="UniProtKB-SubCell"/>
</dbReference>
<dbReference type="GO" id="GO:0000917">
    <property type="term" value="P:division septum assembly"/>
    <property type="evidence" value="ECO:0007669"/>
    <property type="project" value="TreeGrafter"/>
</dbReference>
<dbReference type="GO" id="GO:0043093">
    <property type="term" value="P:FtsZ-dependent cytokinesis"/>
    <property type="evidence" value="ECO:0007669"/>
    <property type="project" value="UniProtKB-UniRule"/>
</dbReference>
<dbReference type="FunFam" id="3.30.1400.10:FF:000001">
    <property type="entry name" value="Cell division protein ZipA"/>
    <property type="match status" value="1"/>
</dbReference>
<dbReference type="Gene3D" id="3.30.1400.10">
    <property type="entry name" value="ZipA, C-terminal FtsZ-binding domain"/>
    <property type="match status" value="1"/>
</dbReference>
<dbReference type="HAMAP" id="MF_00509">
    <property type="entry name" value="ZipA"/>
    <property type="match status" value="1"/>
</dbReference>
<dbReference type="InterPro" id="IPR011919">
    <property type="entry name" value="Cell_div_ZipA"/>
</dbReference>
<dbReference type="InterPro" id="IPR007449">
    <property type="entry name" value="ZipA_FtsZ-bd_C"/>
</dbReference>
<dbReference type="InterPro" id="IPR036765">
    <property type="entry name" value="ZipA_FtsZ-bd_C_sf"/>
</dbReference>
<dbReference type="NCBIfam" id="TIGR02205">
    <property type="entry name" value="septum_zipA"/>
    <property type="match status" value="1"/>
</dbReference>
<dbReference type="PANTHER" id="PTHR38685">
    <property type="entry name" value="CELL DIVISION PROTEIN ZIPA"/>
    <property type="match status" value="1"/>
</dbReference>
<dbReference type="PANTHER" id="PTHR38685:SF1">
    <property type="entry name" value="CELL DIVISION PROTEIN ZIPA"/>
    <property type="match status" value="1"/>
</dbReference>
<dbReference type="Pfam" id="PF04354">
    <property type="entry name" value="ZipA_C"/>
    <property type="match status" value="1"/>
</dbReference>
<dbReference type="SMART" id="SM00771">
    <property type="entry name" value="ZipA_C"/>
    <property type="match status" value="1"/>
</dbReference>
<dbReference type="SUPFAM" id="SSF64383">
    <property type="entry name" value="Cell-division protein ZipA, C-terminal domain"/>
    <property type="match status" value="1"/>
</dbReference>
<gene>
    <name evidence="1" type="primary">zipA</name>
    <name type="ordered locus">Shewana3_1568</name>
</gene>
<evidence type="ECO:0000255" key="1">
    <source>
        <dbReference type="HAMAP-Rule" id="MF_00509"/>
    </source>
</evidence>
<evidence type="ECO:0000256" key="2">
    <source>
        <dbReference type="SAM" id="MobiDB-lite"/>
    </source>
</evidence>
<sequence length="346" mass="38437">MEDLQLVLFVLGAIAIVAVLVHGFWSIRRQQPKSLKDSPMGNFYKKQAERGEGAPKRVDADGFDADGIGAVRVRKANEAHTPEAPAFNPYLKQEAKAQPQPVEPVQVEPKPLFKQEPSMAQPDFSLQSPTAKEQHRGPKASRQEPVLPGHSANLAQAHVGQSHAAMVAQKAAEEQRAQVQMPTQTALFDEEEAYEEEQPQVVEQPDDDLGEPRDVLVLHVVAKEGQQLNGAELLPCFLTLNFKYGDMNIFHRHVDNAGNGKVLFSIANMVKPGFFDPDNMEQFSTQGVVFFMTLPCYGDALMNFSIMLNSARQLADDIDAVVLDGQRQPWGEFTKQDYLHRIRANA</sequence>